<reference key="1">
    <citation type="journal article" date="2000" name="Proc. Natl. Acad. Sci. U.S.A.">
        <title>Xenopus kielin: A dorsalizing factor containing multiple chordin-type repeats secreted from the embryonic midline.</title>
        <authorList>
            <person name="Matsui M."/>
            <person name="Mizuseki K."/>
            <person name="Nakatani J."/>
            <person name="Nakanishi S."/>
            <person name="Sasai Y."/>
        </authorList>
    </citation>
    <scope>NUCLEOTIDE SEQUENCE [MRNA]</scope>
    <scope>SUBCELLULAR LOCATION</scope>
    <scope>DEVELOPMENTAL STAGE</scope>
    <scope>FUNCTION</scope>
    <source>
        <tissue>Embryonic floor plate</tissue>
    </source>
</reference>
<name>KCP_XENLA</name>
<accession>Q9IBG7</accession>
<organism>
    <name type="scientific">Xenopus laevis</name>
    <name type="common">African clawed frog</name>
    <dbReference type="NCBI Taxonomy" id="8355"/>
    <lineage>
        <taxon>Eukaryota</taxon>
        <taxon>Metazoa</taxon>
        <taxon>Chordata</taxon>
        <taxon>Craniata</taxon>
        <taxon>Vertebrata</taxon>
        <taxon>Euteleostomi</taxon>
        <taxon>Amphibia</taxon>
        <taxon>Batrachia</taxon>
        <taxon>Anura</taxon>
        <taxon>Pipoidea</taxon>
        <taxon>Pipidae</taxon>
        <taxon>Xenopodinae</taxon>
        <taxon>Xenopus</taxon>
        <taxon>Xenopus</taxon>
    </lineage>
</organism>
<evidence type="ECO:0000255" key="1"/>
<evidence type="ECO:0000255" key="2">
    <source>
        <dbReference type="PROSITE-ProRule" id="PRU00220"/>
    </source>
</evidence>
<evidence type="ECO:0000255" key="3">
    <source>
        <dbReference type="PROSITE-ProRule" id="PRU00580"/>
    </source>
</evidence>
<evidence type="ECO:0000256" key="4">
    <source>
        <dbReference type="SAM" id="MobiDB-lite"/>
    </source>
</evidence>
<evidence type="ECO:0000269" key="5">
    <source>
    </source>
</evidence>
<proteinExistence type="evidence at transcript level"/>
<comment type="function">
    <text evidence="5">May be a signaling molecule that mediates inductive activities of the embryonic midline. Able to dorsalize mesoderm.</text>
</comment>
<comment type="subcellular location">
    <subcellularLocation>
        <location evidence="5">Secreted</location>
    </subcellularLocation>
</comment>
<comment type="developmental stage">
    <text evidence="5">Expression starts at the mid-gastrula stage in the dorsal midline. Expressed in the axial mesoderm at this stage. At neurula stages, expression is detected both in the axial mesoderm (notochord and prechordal mesoderm) and in the ventral central nervous system (floor plate and ventral forebrain). At tailbud stages, expression is diminished in the notochord and remains in the ventral central nervous system (CNS). During and after tailbud stages, other regions shows detectable levels of expression. The epiphyseal placode has a strong expression. Additional expression is found in dorsal parts of the CNS, especially in the anterior spinal cord and hindbrain as well as in the tailbud mesoderm. At the larval stage, expression is also found in the forming heart. Induced in mesoderm and in ectoderm by nodal-related genes.</text>
</comment>
<comment type="miscellaneous">
    <text>'Kiel' means keel in English. As the expression in the central nervous system (CNS) resembled a keel of ship, the gene was named Kielin.</text>
</comment>
<sequence length="2327" mass="255802">MNTLLWTILLPLLFSFCVCQQPEHQDLEMSVQYYDDNVIDLLEALNVTRSVKGVTKAKGSDPASPAWKFRQRVPHLTLPRDYSVYLLSTTQESLGLHFVAKQAKNNRGTLVAFLSPAATKIDGRPLLRLISDTHTDQLYFEYRTAQTMEPASLHFPGSSPFSGSQWARVALNVNTHKVTLFLDCEEPVVFGKEGAEEMLSLILPLDLEITFASTPSDKESKFLGYWQTAEISPTGFTRRPWHCENRSDSLPLPYSLSGERQMEDEEIQREPRAPDLSDTDHYQQQQSEVPAQLLAKDDRLQRLEEAVKGLTNMIDMIKSQNADLQARVIALESCECRRSTCVWEDKEYQDSETWKKDACNICVCVGGSVTCSVRKDWPQCLGCFHEGRNYNNKDIFSVGPCMSCICQSGEVSCTPKLCPPVTCSDPVTLPNECCPLCATGCSDGHKEGDTWRKDTCTTCTCQNGTISCEREQCPELTCLKRHTPPGQCCAKCQQGCEYEGLIYRNGDYFLSQSNPCVNCSCLNNLVRCLPVQCPLPACTNPVPIPGQCCPSCPVCELDGHPLIPGQNVTTKDGCRLCSCQDGKVQCTESVQCPHICTHGVRSNSCCLDCSACEMHGDIIPNGLTFQGNMDPCESCTCQDGNVHCVRVSCPELSCVLHEKIPGECCSQCQSCMDGTVKRKHGEEWKPQGDPCQSCRCLEGRVQCRKRHCAALCRNPLPPRPGTCCPMCDGCLYNGRSYLNGQPVRSTDQCNRCFCENGNVQCEPIACPQAPCRNPVRRTGECCPRCEGCEYDSRHFAEGVVFTTAHDPCLQCTCLSGEVSCEHLDRKCPPSQCSHPGKAAGQCCPSCDVCDFEGILYTDRQTFQPPGHGPCLKCFCTIGNVRCVEETCPPAPCPNPVRDPEQCCPVCKVCVQDGVEFLEGIEWELDGNPCSSCTCRNGDTVCGVSECPPVSCLHPTRREGECCPVCDSCSYNQRLYSNEQIFTDPDNPCQDCQCKDGTVQCSSIVCPPVLCTIPERTPGQCCAKCPDCRYQDQIFLEGEQFSNPLNQCQECWCRDGHVTCTDRGCTGALCSYPLPGTCCQNNCNGCNYAGKEYPNGADFPHPTDKCRQCHCINGNVQCLAQRCPPLLCAEPFPVPGECCPQCPVPPADCPYSGVTYRHMQRFYDPSDKCRDCICNNGTVTCQRKPCAPTPCLHPLQGDCCRSCDGCLMSGKELANGEQFPQPSDPCSVCVCWEGSVTCQPKTCPVLNCPFPAPGQCCKECQDCQYFGEVYLNGQEFSAPEDSCSRCVCADGFVTCSKKPCYKAGCTHPSTPPGKCCPVCDGCSYNGDALINSQSVPDPSNPLCSECTCRAGSVQCVRKLCGPTSCPHPVTGPCDCPICQGCHFQGHNYIDGEVFTSAQSQCEQCRCMRGHVTCGPRPCDQVTCPHPAEDPCMCPVCDGCNYSGRDCTNGESFPDPEDECSHCTCRNGEVACISVPCPRVSCMYPITPRGECCPRCTGICKHNGRVYQSGDTFHPPGDLCTKCSCQNEMVNCQRVRCSQECSHPVLSPASSCCPVCDRCFYENREYANHETFTSTSDPCQRCVCLDGSVTCTHVVCPYVSCANPITKPGQCCRECPVCRYQGKEFSEGAHWVPHTDPCLKCTCSNGHVDCEPPQCPPLPCTQQVTDPGTCCPRCRGCVYNGREYRDNSNWLSSSDHCMSCMCVDGVTTCSKLQCITSCTNQITIPGECCPVCADCISNSKVYLPGDSYNPSKDPCEICTCESLPNGQQYRHCTKKQCPSLLDCPRSYILPPAEGQCCSSCAQALSNCTNTLVGNEIQATDDPCYTCHCKDLTWVCVHQPCPALSCPRSEQFTHSGSCCPVCNECVVEIEGRRVPDGETWTDRQDPCVTCTCTLGHVECQIEECQPVQCQEGERKVKRPGTCCHECQASAVSCWYQGQRFLSNEHWQVDECTACTCVSGEVHCHSERCPQVSCTAEETPALIPGMCCPHCIPRPATCIAFGDPHYRTFDGKMYHFQGSCTYVLSEDCEGGDFSIHVTNDDRGLRGVSWTKEVTVLIGDAVVQLLQDWVVMVDYQTVELPFLKEPYIYIERKTNTILLNSNIGVKVQWNGRSHLEVSVPGTYRDHLCGLCGNFNNYPQDDLRDRRGQILMSEAAFGNSWRVQSSNDSSSSCWDGQDVDPCKQAGYRARKEANGRCKLLKSSVFEPCHRVVPPEMFFASCVYDLCACGAGDECLCDVLEAYASECREAGVILQWRSPALCAVGCPHDRGYVFDECGPPCPKTCFNKDVPLGVLESHCFKPCVPGCQCPAGLVEHESHCIPPESCPKIIHGNL</sequence>
<keyword id="KW-0175">Coiled coil</keyword>
<keyword id="KW-1015">Disulfide bond</keyword>
<keyword id="KW-1185">Reference proteome</keyword>
<keyword id="KW-0677">Repeat</keyword>
<keyword id="KW-0964">Secreted</keyword>
<keyword id="KW-0732">Signal</keyword>
<gene>
    <name type="primary">kcp</name>
    <name type="synonym">crim2</name>
</gene>
<protein>
    <recommendedName>
        <fullName>Kielin/chordin-like protein</fullName>
    </recommendedName>
    <alternativeName>
        <fullName>Cysteine-rich motor neuron 2 protein</fullName>
        <shortName>CRIM-2</shortName>
    </alternativeName>
    <alternativeName>
        <fullName>Kielin</fullName>
    </alternativeName>
</protein>
<dbReference type="EMBL" id="AB026192">
    <property type="protein sequence ID" value="BAA95483.1"/>
    <property type="molecule type" value="mRNA"/>
</dbReference>
<dbReference type="RefSeq" id="NP_001079355.1">
    <property type="nucleotide sequence ID" value="NM_001085886.1"/>
</dbReference>
<dbReference type="SMR" id="Q9IBG7"/>
<dbReference type="GeneID" id="378806"/>
<dbReference type="KEGG" id="xla:378806"/>
<dbReference type="AGR" id="Xenbase:XB-GENE-865639"/>
<dbReference type="CTD" id="378806"/>
<dbReference type="Xenbase" id="XB-GENE-865639">
    <property type="gene designation" value="kcp.L"/>
</dbReference>
<dbReference type="OrthoDB" id="6132182at2759"/>
<dbReference type="Proteomes" id="UP000186698">
    <property type="component" value="Chromosome 3L"/>
</dbReference>
<dbReference type="Bgee" id="378806">
    <property type="expression patterns" value="Expressed in neurula embryo and 15 other cell types or tissues"/>
</dbReference>
<dbReference type="GO" id="GO:0005576">
    <property type="term" value="C:extracellular region"/>
    <property type="evidence" value="ECO:0000318"/>
    <property type="project" value="GO_Central"/>
</dbReference>
<dbReference type="GO" id="GO:0003170">
    <property type="term" value="P:heart valve development"/>
    <property type="evidence" value="ECO:0000315"/>
    <property type="project" value="Xenbase"/>
</dbReference>
<dbReference type="GO" id="GO:0030513">
    <property type="term" value="P:positive regulation of BMP signaling pathway"/>
    <property type="evidence" value="ECO:0000318"/>
    <property type="project" value="GO_Central"/>
</dbReference>
<dbReference type="CDD" id="cd19941">
    <property type="entry name" value="TIL"/>
    <property type="match status" value="1"/>
</dbReference>
<dbReference type="Gene3D" id="2.60.120.200">
    <property type="match status" value="1"/>
</dbReference>
<dbReference type="Gene3D" id="6.20.200.20">
    <property type="match status" value="21"/>
</dbReference>
<dbReference type="Gene3D" id="2.10.70.10">
    <property type="entry name" value="Complement Module, domain 1"/>
    <property type="match status" value="4"/>
</dbReference>
<dbReference type="InterPro" id="IPR013320">
    <property type="entry name" value="ConA-like_dom_sf"/>
</dbReference>
<dbReference type="InterPro" id="IPR052424">
    <property type="entry name" value="Kielin_Chordin-BMP_Reg"/>
</dbReference>
<dbReference type="InterPro" id="IPR036084">
    <property type="entry name" value="Ser_inhib-like_sf"/>
</dbReference>
<dbReference type="InterPro" id="IPR048287">
    <property type="entry name" value="TSPN-like_N"/>
</dbReference>
<dbReference type="InterPro" id="IPR014853">
    <property type="entry name" value="VWF/SSPO/ZAN-like_Cys-rich_dom"/>
</dbReference>
<dbReference type="InterPro" id="IPR001007">
    <property type="entry name" value="VWF_dom"/>
</dbReference>
<dbReference type="InterPro" id="IPR001846">
    <property type="entry name" value="VWF_type-D"/>
</dbReference>
<dbReference type="PANTHER" id="PTHR46698">
    <property type="entry name" value="CROSSVEINLESS 2"/>
    <property type="match status" value="1"/>
</dbReference>
<dbReference type="PANTHER" id="PTHR46698:SF6">
    <property type="entry name" value="KIELIN_CHORDIN-LIKE PROTEIN"/>
    <property type="match status" value="1"/>
</dbReference>
<dbReference type="Pfam" id="PF00093">
    <property type="entry name" value="VWC"/>
    <property type="match status" value="16"/>
</dbReference>
<dbReference type="Pfam" id="PF00094">
    <property type="entry name" value="VWD"/>
    <property type="match status" value="1"/>
</dbReference>
<dbReference type="SMART" id="SM00832">
    <property type="entry name" value="C8"/>
    <property type="match status" value="1"/>
</dbReference>
<dbReference type="SMART" id="SM00210">
    <property type="entry name" value="TSPN"/>
    <property type="match status" value="1"/>
</dbReference>
<dbReference type="SMART" id="SM00214">
    <property type="entry name" value="VWC"/>
    <property type="match status" value="28"/>
</dbReference>
<dbReference type="SMART" id="SM00215">
    <property type="entry name" value="VWC_out"/>
    <property type="match status" value="12"/>
</dbReference>
<dbReference type="SMART" id="SM00216">
    <property type="entry name" value="VWD"/>
    <property type="match status" value="1"/>
</dbReference>
<dbReference type="SUPFAM" id="SSF49899">
    <property type="entry name" value="Concanavalin A-like lectins/glucanases"/>
    <property type="match status" value="1"/>
</dbReference>
<dbReference type="SUPFAM" id="SSF57603">
    <property type="entry name" value="FnI-like domain"/>
    <property type="match status" value="27"/>
</dbReference>
<dbReference type="SUPFAM" id="SSF57567">
    <property type="entry name" value="Serine protease inhibitors"/>
    <property type="match status" value="1"/>
</dbReference>
<dbReference type="PROSITE" id="PS01208">
    <property type="entry name" value="VWFC_1"/>
    <property type="match status" value="20"/>
</dbReference>
<dbReference type="PROSITE" id="PS50184">
    <property type="entry name" value="VWFC_2"/>
    <property type="match status" value="23"/>
</dbReference>
<dbReference type="PROSITE" id="PS51233">
    <property type="entry name" value="VWFD"/>
    <property type="match status" value="1"/>
</dbReference>
<feature type="signal peptide" evidence="1">
    <location>
        <begin position="1"/>
        <end position="19"/>
    </location>
</feature>
<feature type="chain" id="PRO_0000318588" description="Kielin/chordin-like protein">
    <location>
        <begin position="20"/>
        <end position="2327"/>
    </location>
</feature>
<feature type="domain" description="VWFC 1" evidence="2">
    <location>
        <begin position="339"/>
        <end position="400"/>
    </location>
</feature>
<feature type="domain" description="VWFC 2" evidence="2">
    <location>
        <begin position="401"/>
        <end position="438"/>
    </location>
</feature>
<feature type="domain" description="VWFC 3" evidence="2">
    <location>
        <begin position="439"/>
        <end position="493"/>
    </location>
</feature>
<feature type="domain" description="VWFC 4" evidence="2">
    <location>
        <begin position="494"/>
        <end position="553"/>
    </location>
</feature>
<feature type="domain" description="VWFC 5" evidence="2">
    <location>
        <begin position="554"/>
        <end position="610"/>
    </location>
</feature>
<feature type="domain" description="VWFC 6" evidence="2">
    <location>
        <begin position="611"/>
        <end position="669"/>
    </location>
</feature>
<feature type="domain" description="VWFC 7" evidence="2">
    <location>
        <begin position="670"/>
        <end position="728"/>
    </location>
</feature>
<feature type="domain" description="VWFC 8" evidence="2">
    <location>
        <begin position="729"/>
        <end position="786"/>
    </location>
</feature>
<feature type="domain" description="VWFC 9" evidence="2">
    <location>
        <begin position="787"/>
        <end position="847"/>
    </location>
</feature>
<feature type="domain" description="VWFC 10" evidence="2">
    <location>
        <begin position="848"/>
        <end position="907"/>
    </location>
</feature>
<feature type="domain" description="VWFC 11" evidence="2">
    <location>
        <begin position="908"/>
        <end position="966"/>
    </location>
</feature>
<feature type="domain" description="VWFC 12" evidence="2">
    <location>
        <begin position="967"/>
        <end position="1025"/>
    </location>
</feature>
<feature type="domain" description="VWFC 13" evidence="2">
    <location>
        <begin position="1026"/>
        <end position="1083"/>
    </location>
</feature>
<feature type="domain" description="VWFC 14" evidence="2">
    <location>
        <begin position="1084"/>
        <end position="1142"/>
    </location>
</feature>
<feature type="domain" description="VWFC 15" evidence="2">
    <location>
        <begin position="1146"/>
        <end position="1203"/>
    </location>
</feature>
<feature type="domain" description="VWFC 16" evidence="2">
    <location>
        <begin position="1204"/>
        <end position="1260"/>
    </location>
</feature>
<feature type="domain" description="VWFC 17" evidence="2">
    <location>
        <begin position="1261"/>
        <end position="1319"/>
    </location>
</feature>
<feature type="domain" description="VWFC 18" evidence="2">
    <location>
        <begin position="1321"/>
        <end position="1377"/>
    </location>
</feature>
<feature type="domain" description="VWFC 19" evidence="2">
    <location>
        <begin position="1378"/>
        <end position="1439"/>
    </location>
</feature>
<feature type="domain" description="VWFC 20" evidence="2">
    <location>
        <begin position="1440"/>
        <end position="1495"/>
    </location>
</feature>
<feature type="domain" description="VWFC 21" evidence="2">
    <location>
        <begin position="1496"/>
        <end position="1555"/>
    </location>
</feature>
<feature type="domain" description="VWFC 22" evidence="2">
    <location>
        <begin position="1556"/>
        <end position="1614"/>
    </location>
</feature>
<feature type="domain" description="VWFC 23" evidence="2">
    <location>
        <begin position="1615"/>
        <end position="1673"/>
    </location>
</feature>
<feature type="domain" description="VWFC 24" evidence="2">
    <location>
        <begin position="1674"/>
        <end position="1731"/>
    </location>
</feature>
<feature type="domain" description="VWFC 25" evidence="2">
    <location>
        <begin position="1732"/>
        <end position="1799"/>
    </location>
</feature>
<feature type="domain" description="VWFC 26" evidence="2">
    <location>
        <begin position="1800"/>
        <end position="1860"/>
    </location>
</feature>
<feature type="domain" description="VWFC 27" evidence="2">
    <location>
        <begin position="1861"/>
        <end position="1924"/>
    </location>
</feature>
<feature type="domain" description="VWFC 28" evidence="2">
    <location>
        <begin position="1928"/>
        <end position="1988"/>
    </location>
</feature>
<feature type="domain" description="VWFD" evidence="3">
    <location>
        <begin position="1992"/>
        <end position="2168"/>
    </location>
</feature>
<feature type="domain" description="TIL">
    <location>
        <begin position="2259"/>
        <end position="2319"/>
    </location>
</feature>
<feature type="region of interest" description="Disordered" evidence="4">
    <location>
        <begin position="250"/>
        <end position="294"/>
    </location>
</feature>
<feature type="coiled-coil region" evidence="1">
    <location>
        <begin position="291"/>
        <end position="332"/>
    </location>
</feature>
<feature type="compositionally biased region" description="Basic and acidic residues" evidence="4">
    <location>
        <begin position="268"/>
        <end position="281"/>
    </location>
</feature>
<feature type="disulfide bond" evidence="3">
    <location>
        <begin position="1994"/>
        <end position="2126"/>
    </location>
</feature>
<feature type="disulfide bond" evidence="3">
    <location>
        <begin position="2016"/>
        <end position="2167"/>
    </location>
</feature>